<name>R1A_CVHN2</name>
<sequence>MIKTSKYGLGFKWAPEFRWLLPDAAEELASPMKSDEGGLCPSTGQAMESVGFVYDNHVKIDCRCILGQEWHVQSNLIRDIFVHEDLHVVEVLTKTAVKSGTAILIKSPLHSLGGFPKGYVMGLFRSYKTKRYVVHHLSMTTSTTNFGEDFLGWIVPFGFMPSYVHKWFQFCRLYIEESDLIISNFKFDDYDFSVEDAYAEVHAEPKGKYSQKAYALLRQYRGIKPVLFVDQYGCDYSGKLADCLQAYGHYSLQDMRQKQSVWLANCDFDIVVAWHVVRDSRFVMRLQTIATICGIKYVAQPTEDVVDGAVVIREPVHLLSADAIVLKLPSLMKVMTHMDDFSIKSIYNVDLCDCGFVMQYGYVDCFNDNCDFYGWVSGNMMDGFSCPLCCTVYDSSEVKAQSSGVIPENPVLFTNSTDTVNPDSFNLYGYSVTPFGSCIYWSPRPGLWIPIIKSSVKSYDDLVYSGVVGCKSIVKETALITHALYLDYVQCKCGNLEQNHILGVNNSWCRQLLLNRGDYNMLLKNIDLFVKRRADFACKFAVCGDGFVPFLLDGLIPRSYYLIQSGIFFTSLMSQFSQEVSDMCLKMCILFMDRVSVATFYIEHYVNRLVTQFKLLGTTLVNKMVNWFNTMLDASAPATGWLLYQLLNGLFVVSQANFNFVALIPDYAKILVNKFYTFFKLLLECVTVDVLKDMPVLKTINGLVCIVGNKFYNVSTGLIPGFVLPCNAQEQQIYFFEGVAESVIVEDDVIENVKSSLSSYEYCQPPKSVEKICIIDNMYMGKCGDKFFPIVMNDKNICLLDQAWRFPCAGRKVNFNEKPVVMEIPSLMTVKVMFDLDSTFDDILGKVCSEFEVEKGVTVDDFVAVVCDAIENALNSCKDHPVVGYQVRAFLNKLNENVVYLFDEAGDEAMASRMYCTFAIEDVEDVISSEAVEDTIDGVVEDTINDDEDVVTGDNDDEDVVTGDNDDEDVVTGDNDDEDVVTGDNDDEDVVTGDNDDEDVVTGDNDDEDVVTGDNDDEDVVTGDNDDEDVVTGDNDDEDVVTGDNDDEDVVTGDNDDEEIVTGDNDDQIVVTGDDVDDIESVYDFDTYKALLVFNDVYNDALFVSYGSSVETETYFKVNGLWSPTITHTNCWLRSVLLVMQKLPFKFKDLAIENMWLSYKVGYNQSFVDYLLTTIPKAIVLPQGGYVADFAYWFLNQFDINAYANWCCLKCGFSFDLNGLDAVFFYGDIVSHVCKCGHNMTLIAADLPCTLHFSLFDDNFCAFCTPKKIFIAACAVDVNVCHSVAVIGDEQIDGKFVTKFSGDKFDFIVGYGMSFSMSSFELAQLYGLCITPNVCFVKGDIINVARLVKADVIVNPANGHMLHGGGVAKAIAVAAGKKFSKETAAMVKSKGVCQVGDCYVSTGGKLCKTILNIVGPDARQDGRQSYVLLARAYKHLNNYDCCLSTLISAGIFSVPADVSLTYLLGVVDKQVILVSNNKEDFDIIQKCQITSVVGTKALAVRLTANVGRVIKFETDAYKLFLSGDDCFVSNSSVIQEVLLLRHDIQLNNDVRDYLLSKMTSLPKDWRLINKFDVINGVKTVKYFECPNSIYICSQGKDFGYVCDGSFYKATVNQVCVLLAKKIDVLLTVDGVNFKSISLTVGEVFGKILGNVFCDGIDVTKLKCSDFYADKILYQYENLSLADISAVQSSFGFDQQQLLAYYNFLTVCKWSVVVNGPFFSFEQSHNNCYVNVACLMLQHINLKFNKWQWQEAWYEFRAGRPHRLVALVLAKGHFKFDEPSDATDFIRVVLKQADLSGAICELELICDCGIKQESRVGVDAVMHFGTLAKTDLFNGYKIGCNCAGRIVHCTKLNVPFLICSNTPLSKDLPDDVVAANMFMGVGVGHYTHLKCGSPYQHYDACSVKKYTGVSGCLTDCLYLKNLTQTFTSMLTNYFLDDVEMVAYNPDLSQYYCDNGKYYTKPIIKAQFKPFAKVDGVYTNFKLVGHDICAQLNDKLGFNVDLPFVEYKVTVWPVATGDVVLASDDLYVKRYFKGCETFGKPVIWLCHDEASLNSLTYFNKPSFKSENRYSVLSVDSVSEESQGNVVTSVMESQISTKEVKLKGVRKTVKIEDAIIVNDENSSIKVVKSLSLVDVWDMYLTGCDYVVWVANELSRLVKSPTVREYIRYGIKPITIPIDLLCLRDDNQTLLVPKIFKARAIEFYGFLKWLFIYVFSLLHFTNDKTIFYTTEIASKFTFNLFCLALKNAFQTFRWSIFIKGFLVVATVFLFWFNFLYINVIFSDFYLPNISVFPIFVGRIVMWIKATFGLVTICDFYSKLGVGFTSHFCNGSFICELCYSGFDMLDTYAAIDFVQYEVDRRVLFDYVSLVKLIVELVIGYSLYTVWFYPLFCLIGLQLFTTWLPDLFMLETMHWLIRFIVFVANMLPAFVLLRFYIVVTAMYKVVGFIRHIVYGCNKAGCLFCYKRNCSVRVKCSTIVGGVIRYYDITANGGTGFCVKHQWNCFNCHSFKPGNTFITVEAAIELSKELKRPVNPTDASHYVVTDIKQVGCMMRLFYDRDGQRVYDDVDASLFVDINNLLHSKVKVVPNLYVVVVESDADRANFLNAVVFYAQSLYRPILLVDKKLITTACNGISVTQTMFDVYVDTFMSHFDVDRKSFNNFVNIAHASLREGVQLEKVLDTFVGCVRKCCSIDSDVETRFITKSMISAVAAGLEFTDENYNNLVPTYLKSDNIVAADLGVLIQNGAKHVQGNVAKAANISCIWFIDTFNQLTADLQHKLKKACVKTGLKLKLTFNKQEASVPILTTPFSLKGGVVLSNLLYILFFISLICFILLWALLPTYSVYKSDIHLPAYASFKVIDNGVVRDISVNDLCFANKFFQFDQWYESTFGSFYYHNSMDCPIVVAVMDEDIGSTMFNVPTKVLRHGFHVLHFLTYAFASDSVQCYTPHIQISYNDFYASGCVLSSLCTMFKRGDGTPHPYCYSDGVMKNASLYTSLVPHTRYSLANSNGFIRFPDVISEGIVRIVRTRSMTYCRVGACEYAEEGICFNFNSSWVLNNDYYRSMPGTFCGRDLFDLFYQFFSSLIRPIDFFSLTASSIFGAILAIVVVLVFYYLIKLKRAFGDYTSVVVINVIVWCINFLMLFVFQVYPICACVYACFYFYVTLYFPSEISVIMHLQWIVMYGAIMPFWFCVTYVAMVIANHVLWLFSYCRKIGVNVCNDSTFEETSLTTFMITKDSYCRLKNSVSDVAYNRYLSLYNKYRYYSGKMDTAAYREAACSQLAKAMETFNHNNGNDVLYQPPTASVSTSFLQSGIVKMVSPTSKIEPCIVSVTYGSMTLNGLWLDDKVYCPRHVICLSSNMNEPDYSALLCRVTLGDFTIMSGRMSLTVVSYQMQGCQLVLTVSLQNPYTPKYTFGVVKPGETFTVLAAYNGRPQGAFHVTMRSSYTIKGSFLCGSCGSVGYVLTGDSVKFVYMHQLELSTGCHTGTDFTGNFYGPYRDAQVVQLPVKDYVQTVNVIAWLYAAILNNCAWFVQNDVCSIEDFNVWAMTNGFSQVKADLVLDALASMTGVSIETLLAAIKRLYMGFQGRQILGSCTFEDELAPSDVYQQLAGVKLQSKTKRFIKETIYWILISTFLFSCIISAFVKWTIFMYINTHMIGVTLCVLCFVSFMMLLVKHKHFYLTMYIIPVLCTLFYVNYLVVYKEGFRGLTYVWLSYFVPAVNFTYVYEVFYGCILCVFAIFITMHSINHDIFSLMFLVGRIVTLISMWYFGSNLEEDVLLFITAFLGTYTWTTILSLAIAKIVANWLSVNIFYFTDVPYIKLILLSYLFIGYILSCYWGFFSLLNSVFRMPMGVYNYKISVQELRYMNANGLRPPRNSFEAILLNLKLLGIGGVPVIEVSQIQSKLTDVKCANVVLLNCLQHLHVASNSRLWQYCSILHNEILSTSDLSVAFDKLAQLLIVLFANPAAVDTKCLASIDEVSDDYVQDSTVLQALQSEFVNMASFVEYEVAKKNLADAKNSGSVNQQQIKQLEKACNIAKSVYERDKAVARKLERMADLALTNMYKEARINDKKSKVVSALQTMLFSMVRKLDNQALNSILDNAVKGCVPLNAIPALAANTLTIIIPDKQVFDKVVDNVYVAYAGSVWHIQTVQDADGINKQLTDISVDSNWPLVIIANRYNEVANAVMQNNELMPHKLKIQVVNSGSDMNCNIPTQCYYNNGSSGRIVYAVLSDVDGLKYTKIIKDDGNCVVLELDPPCKFSIQDVKGLKIKYLYFIKGCNTLARGWVVGTLSSTIRLQAGVATEYAANSSILSLCAFSVDPKKTYLDYIQQGGVPIINCVKMLCDHAGTGMAITIKPEATINQDSYGGASVCIYCRARVEHPDVDGLCKLRGKFVQVPLGIKDPILYVLTHDVCQVCGFWRDGSCSCVGSGVAVQSKDLNFLNGFGVLV</sequence>
<dbReference type="EC" id="3.4.19.12"/>
<dbReference type="EC" id="3.4.22.-"/>
<dbReference type="EC" id="3.4.22.69"/>
<dbReference type="EC" id="2.7.7.50"/>
<dbReference type="EMBL" id="AY884001">
    <property type="status" value="NOT_ANNOTATED_CDS"/>
    <property type="molecule type" value="Genomic_RNA"/>
</dbReference>
<dbReference type="SMR" id="P0C6U4"/>
<dbReference type="IntAct" id="P0C6U4">
    <property type="interactions" value="1"/>
</dbReference>
<dbReference type="Proteomes" id="UP000006551">
    <property type="component" value="Genome"/>
</dbReference>
<dbReference type="GO" id="GO:0033644">
    <property type="term" value="C:host cell membrane"/>
    <property type="evidence" value="ECO:0007669"/>
    <property type="project" value="UniProtKB-SubCell"/>
</dbReference>
<dbReference type="GO" id="GO:0044220">
    <property type="term" value="C:host cell perinuclear region of cytoplasm"/>
    <property type="evidence" value="ECO:0007669"/>
    <property type="project" value="UniProtKB-SubCell"/>
</dbReference>
<dbReference type="GO" id="GO:0016020">
    <property type="term" value="C:membrane"/>
    <property type="evidence" value="ECO:0007669"/>
    <property type="project" value="UniProtKB-KW"/>
</dbReference>
<dbReference type="GO" id="GO:0004843">
    <property type="term" value="F:cysteine-type deubiquitinase activity"/>
    <property type="evidence" value="ECO:0007669"/>
    <property type="project" value="UniProtKB-EC"/>
</dbReference>
<dbReference type="GO" id="GO:0004197">
    <property type="term" value="F:cysteine-type endopeptidase activity"/>
    <property type="evidence" value="ECO:0007669"/>
    <property type="project" value="InterPro"/>
</dbReference>
<dbReference type="GO" id="GO:0004519">
    <property type="term" value="F:endonuclease activity"/>
    <property type="evidence" value="ECO:0007669"/>
    <property type="project" value="UniProtKB-KW"/>
</dbReference>
<dbReference type="GO" id="GO:0008168">
    <property type="term" value="F:methyltransferase activity"/>
    <property type="evidence" value="ECO:0007669"/>
    <property type="project" value="UniProtKB-KW"/>
</dbReference>
<dbReference type="GO" id="GO:0008242">
    <property type="term" value="F:omega peptidase activity"/>
    <property type="evidence" value="ECO:0007669"/>
    <property type="project" value="InterPro"/>
</dbReference>
<dbReference type="GO" id="GO:0003968">
    <property type="term" value="F:RNA-directed RNA polymerase activity"/>
    <property type="evidence" value="ECO:0007669"/>
    <property type="project" value="InterPro"/>
</dbReference>
<dbReference type="GO" id="GO:0003727">
    <property type="term" value="F:single-stranded RNA binding"/>
    <property type="evidence" value="ECO:0007669"/>
    <property type="project" value="InterPro"/>
</dbReference>
<dbReference type="GO" id="GO:0008270">
    <property type="term" value="F:zinc ion binding"/>
    <property type="evidence" value="ECO:0007669"/>
    <property type="project" value="UniProtKB-KW"/>
</dbReference>
<dbReference type="GO" id="GO:0032259">
    <property type="term" value="P:methylation"/>
    <property type="evidence" value="ECO:0007669"/>
    <property type="project" value="UniProtKB-KW"/>
</dbReference>
<dbReference type="GO" id="GO:0006508">
    <property type="term" value="P:proteolysis"/>
    <property type="evidence" value="ECO:0007669"/>
    <property type="project" value="UniProtKB-KW"/>
</dbReference>
<dbReference type="GO" id="GO:0010506">
    <property type="term" value="P:regulation of autophagy"/>
    <property type="evidence" value="ECO:0007669"/>
    <property type="project" value="InterPro"/>
</dbReference>
<dbReference type="GO" id="GO:0039520">
    <property type="term" value="P:symbiont-mediated activation of host autophagy"/>
    <property type="evidence" value="ECO:0007669"/>
    <property type="project" value="UniProtKB-KW"/>
</dbReference>
<dbReference type="GO" id="GO:0039595">
    <property type="term" value="P:symbiont-mediated degradation of host mRNA"/>
    <property type="evidence" value="ECO:0007669"/>
    <property type="project" value="UniProtKB-KW"/>
</dbReference>
<dbReference type="GO" id="GO:0039648">
    <property type="term" value="P:symbiont-mediated perturbation of host ubiquitin-like protein modification"/>
    <property type="evidence" value="ECO:0007669"/>
    <property type="project" value="UniProtKB-KW"/>
</dbReference>
<dbReference type="GO" id="GO:0039548">
    <property type="term" value="P:symbiont-mediated suppression of host cytoplasmic pattern recognition receptor signaling pathway via inhibition of IRF3 activity"/>
    <property type="evidence" value="ECO:0007669"/>
    <property type="project" value="UniProtKB-KW"/>
</dbReference>
<dbReference type="GO" id="GO:0039657">
    <property type="term" value="P:symbiont-mediated suppression of host gene expression"/>
    <property type="evidence" value="ECO:0007669"/>
    <property type="project" value="UniProtKB-KW"/>
</dbReference>
<dbReference type="GO" id="GO:0039579">
    <property type="term" value="P:symbiont-mediated suppression of host ISG15-protein conjugation"/>
    <property type="evidence" value="ECO:0007669"/>
    <property type="project" value="UniProtKB-KW"/>
</dbReference>
<dbReference type="GO" id="GO:0039502">
    <property type="term" value="P:symbiont-mediated suppression of host type I interferon-mediated signaling pathway"/>
    <property type="evidence" value="ECO:0007669"/>
    <property type="project" value="UniProtKB-KW"/>
</dbReference>
<dbReference type="GO" id="GO:0019079">
    <property type="term" value="P:viral genome replication"/>
    <property type="evidence" value="ECO:0007669"/>
    <property type="project" value="InterPro"/>
</dbReference>
<dbReference type="GO" id="GO:0019082">
    <property type="term" value="P:viral protein processing"/>
    <property type="evidence" value="ECO:0007669"/>
    <property type="project" value="InterPro"/>
</dbReference>
<dbReference type="GO" id="GO:0075523">
    <property type="term" value="P:viral translational frameshifting"/>
    <property type="evidence" value="ECO:0007669"/>
    <property type="project" value="UniProtKB-KW"/>
</dbReference>
<dbReference type="CDD" id="cd21901">
    <property type="entry name" value="alpha_betaCoV_Nsp10"/>
    <property type="match status" value="1"/>
</dbReference>
<dbReference type="CDD" id="cd21560">
    <property type="entry name" value="betaCoV-Nsp6"/>
    <property type="match status" value="1"/>
</dbReference>
<dbReference type="CDD" id="cd21519">
    <property type="entry name" value="betaCoV_Nsp2_MHV-like"/>
    <property type="match status" value="1"/>
</dbReference>
<dbReference type="CDD" id="cd21666">
    <property type="entry name" value="betaCoV_Nsp5_Mpro"/>
    <property type="match status" value="1"/>
</dbReference>
<dbReference type="CDD" id="cd21827">
    <property type="entry name" value="betaCoV_Nsp7"/>
    <property type="match status" value="1"/>
</dbReference>
<dbReference type="CDD" id="cd21831">
    <property type="entry name" value="betaCoV_Nsp8"/>
    <property type="match status" value="1"/>
</dbReference>
<dbReference type="CDD" id="cd21898">
    <property type="entry name" value="betaCoV_Nsp9"/>
    <property type="match status" value="1"/>
</dbReference>
<dbReference type="CDD" id="cd21732">
    <property type="entry name" value="betaCoV_PLPro"/>
    <property type="match status" value="1"/>
</dbReference>
<dbReference type="CDD" id="cd21473">
    <property type="entry name" value="cv_Nsp4_TM"/>
    <property type="match status" value="1"/>
</dbReference>
<dbReference type="CDD" id="cd21557">
    <property type="entry name" value="Macro_X_Nsp3-like"/>
    <property type="match status" value="1"/>
</dbReference>
<dbReference type="CDD" id="cd21879">
    <property type="entry name" value="MHV-like_Nsp1"/>
    <property type="match status" value="1"/>
</dbReference>
<dbReference type="CDD" id="cd21812">
    <property type="entry name" value="MHV-like_Nsp3_betaSM"/>
    <property type="match status" value="1"/>
</dbReference>
<dbReference type="CDD" id="cd21824">
    <property type="entry name" value="MHV-like_Nsp3_NAB"/>
    <property type="match status" value="1"/>
</dbReference>
<dbReference type="CDD" id="cd21714">
    <property type="entry name" value="TM_Y_MHV-like_Nsp3_C"/>
    <property type="match status" value="1"/>
</dbReference>
<dbReference type="CDD" id="cd21467">
    <property type="entry name" value="Ubl1_cv_Nsp3_N-like"/>
    <property type="match status" value="1"/>
</dbReference>
<dbReference type="FunFam" id="1.10.150.420:FF:000001">
    <property type="entry name" value="Replicase polyprotein"/>
    <property type="match status" value="1"/>
</dbReference>
<dbReference type="Gene3D" id="1.10.8.1190">
    <property type="match status" value="2"/>
</dbReference>
<dbReference type="Gene3D" id="2.60.120.1680">
    <property type="match status" value="1"/>
</dbReference>
<dbReference type="Gene3D" id="3.10.20.350">
    <property type="match status" value="1"/>
</dbReference>
<dbReference type="Gene3D" id="3.10.20.540">
    <property type="match status" value="1"/>
</dbReference>
<dbReference type="Gene3D" id="6.10.140.2090">
    <property type="match status" value="1"/>
</dbReference>
<dbReference type="Gene3D" id="1.10.150.420">
    <property type="entry name" value="Coronavirus nonstructural protein 4 C-terminus"/>
    <property type="match status" value="1"/>
</dbReference>
<dbReference type="Gene3D" id="3.40.220.10">
    <property type="entry name" value="Leucine Aminopeptidase, subunit E, domain 1"/>
    <property type="match status" value="1"/>
</dbReference>
<dbReference type="Gene3D" id="1.10.1840.10">
    <property type="entry name" value="main proteinase (3clpro) structure, domain 3"/>
    <property type="match status" value="1"/>
</dbReference>
<dbReference type="Gene3D" id="1.10.8.370">
    <property type="entry name" value="nsp7 replicase"/>
    <property type="match status" value="1"/>
</dbReference>
<dbReference type="Gene3D" id="3.30.70.3540">
    <property type="entry name" value="Nsp8 replicase, head domain"/>
    <property type="match status" value="1"/>
</dbReference>
<dbReference type="Gene3D" id="2.40.10.250">
    <property type="entry name" value="Replicase NSP9"/>
    <property type="match status" value="1"/>
</dbReference>
<dbReference type="Gene3D" id="3.40.50.11020">
    <property type="entry name" value="Replicase polyprotein, nucleic acid-binding domain"/>
    <property type="match status" value="1"/>
</dbReference>
<dbReference type="Gene3D" id="2.40.10.10">
    <property type="entry name" value="Trypsin-like serine proteases"/>
    <property type="match status" value="2"/>
</dbReference>
<dbReference type="InterPro" id="IPR046443">
    <property type="entry name" value="a/bCoV_NSP1_glob"/>
</dbReference>
<dbReference type="InterPro" id="IPR022570">
    <property type="entry name" value="B-CoV_A_NSP1"/>
</dbReference>
<dbReference type="InterPro" id="IPR046442">
    <property type="entry name" value="bCoV_NSP1_C"/>
</dbReference>
<dbReference type="InterPro" id="IPR043613">
    <property type="entry name" value="CoV_NSP2_C"/>
</dbReference>
<dbReference type="InterPro" id="IPR047573">
    <property type="entry name" value="CoV_NSP2_M"/>
</dbReference>
<dbReference type="InterPro" id="IPR049894">
    <property type="entry name" value="COV_NSP3_3ECTO"/>
</dbReference>
<dbReference type="InterPro" id="IPR043611">
    <property type="entry name" value="CoV_NSP3_C"/>
</dbReference>
<dbReference type="InterPro" id="IPR047566">
    <property type="entry name" value="CoV_NSP3_Y"/>
</dbReference>
<dbReference type="InterPro" id="IPR032505">
    <property type="entry name" value="CoV_NSP4_C"/>
</dbReference>
<dbReference type="InterPro" id="IPR043612">
    <property type="entry name" value="CoV_NSP4_N"/>
</dbReference>
<dbReference type="InterPro" id="IPR022733">
    <property type="entry name" value="DPUP_SUD_C_bCoV"/>
</dbReference>
<dbReference type="InterPro" id="IPR002589">
    <property type="entry name" value="Macro_dom"/>
</dbReference>
<dbReference type="InterPro" id="IPR043472">
    <property type="entry name" value="Macro_dom-like"/>
</dbReference>
<dbReference type="InterPro" id="IPR044371">
    <property type="entry name" value="Macro_X_NSP3-like"/>
</dbReference>
<dbReference type="InterPro" id="IPR036333">
    <property type="entry name" value="NSP10_sf_CoV"/>
</dbReference>
<dbReference type="InterPro" id="IPR044384">
    <property type="entry name" value="NSP2_MHV-like"/>
</dbReference>
<dbReference type="InterPro" id="IPR043615">
    <property type="entry name" value="NSP2_N_CoV"/>
</dbReference>
<dbReference type="InterPro" id="IPR044381">
    <property type="entry name" value="NSP3_DPUP_MHV"/>
</dbReference>
<dbReference type="InterPro" id="IPR047567">
    <property type="entry name" value="NSP3_G2M_bCoV"/>
</dbReference>
<dbReference type="InterPro" id="IPR032592">
    <property type="entry name" value="NSP3_NAB_bCoV"/>
</dbReference>
<dbReference type="InterPro" id="IPR042570">
    <property type="entry name" value="NSP3_NAB_bCoV_sf"/>
</dbReference>
<dbReference type="InterPro" id="IPR044357">
    <property type="entry name" value="NSP3_Ubl1_dom_CoV"/>
</dbReference>
<dbReference type="InterPro" id="IPR044353">
    <property type="entry name" value="Nsp3_Ubl2_dom_CoV"/>
</dbReference>
<dbReference type="InterPro" id="IPR038083">
    <property type="entry name" value="NSP3A-like"/>
</dbReference>
<dbReference type="InterPro" id="IPR038123">
    <property type="entry name" value="NSP4_C_sf_CoV"/>
</dbReference>
<dbReference type="InterPro" id="IPR044367">
    <property type="entry name" value="NSP6_betaCoV"/>
</dbReference>
<dbReference type="InterPro" id="IPR043610">
    <property type="entry name" value="NSP6_CoV"/>
</dbReference>
<dbReference type="InterPro" id="IPR014828">
    <property type="entry name" value="NSP7_CoV"/>
</dbReference>
<dbReference type="InterPro" id="IPR037204">
    <property type="entry name" value="NSP7_sf_CoV"/>
</dbReference>
<dbReference type="InterPro" id="IPR014829">
    <property type="entry name" value="NSP8_CoV"/>
</dbReference>
<dbReference type="InterPro" id="IPR037230">
    <property type="entry name" value="NSP8_sf_CoV"/>
</dbReference>
<dbReference type="InterPro" id="IPR014822">
    <property type="entry name" value="NSP9_CoV"/>
</dbReference>
<dbReference type="InterPro" id="IPR036499">
    <property type="entry name" value="NSP9_sf_CoV"/>
</dbReference>
<dbReference type="InterPro" id="IPR002705">
    <property type="entry name" value="Pept_C30/C16_B_coronavir"/>
</dbReference>
<dbReference type="InterPro" id="IPR013016">
    <property type="entry name" value="Peptidase_C16_CoV"/>
</dbReference>
<dbReference type="InterPro" id="IPR008740">
    <property type="entry name" value="Peptidase_C30_CoV"/>
</dbReference>
<dbReference type="InterPro" id="IPR043477">
    <property type="entry name" value="Peptidase_C30_dom3_CoV"/>
</dbReference>
<dbReference type="InterPro" id="IPR009003">
    <property type="entry name" value="Peptidase_S1_PA"/>
</dbReference>
<dbReference type="InterPro" id="IPR043504">
    <property type="entry name" value="Peptidase_S1_PA_chymotrypsin"/>
</dbReference>
<dbReference type="InterPro" id="IPR043177">
    <property type="entry name" value="PLpro_N_sf_CoV"/>
</dbReference>
<dbReference type="InterPro" id="IPR043503">
    <property type="entry name" value="PLpro_palm_finger_dom_CoV"/>
</dbReference>
<dbReference type="InterPro" id="IPR043178">
    <property type="entry name" value="PLpro_thumb_sf_CoV"/>
</dbReference>
<dbReference type="InterPro" id="IPR018995">
    <property type="entry name" value="RNA_synth_NSP10_CoV"/>
</dbReference>
<dbReference type="Pfam" id="PF11963">
    <property type="entry name" value="B-CoV_A_NSP1"/>
    <property type="match status" value="1"/>
</dbReference>
<dbReference type="Pfam" id="PF16251">
    <property type="entry name" value="bCoV_NAB"/>
    <property type="match status" value="1"/>
</dbReference>
<dbReference type="Pfam" id="PF09401">
    <property type="entry name" value="CoV_NSP10"/>
    <property type="match status" value="1"/>
</dbReference>
<dbReference type="Pfam" id="PF19218">
    <property type="entry name" value="CoV_NSP3_C"/>
    <property type="match status" value="1"/>
</dbReference>
<dbReference type="Pfam" id="PF16348">
    <property type="entry name" value="CoV_NSP4_C"/>
    <property type="match status" value="1"/>
</dbReference>
<dbReference type="Pfam" id="PF19217">
    <property type="entry name" value="CoV_NSP4_N"/>
    <property type="match status" value="1"/>
</dbReference>
<dbReference type="Pfam" id="PF19213">
    <property type="entry name" value="CoV_NSP6"/>
    <property type="match status" value="1"/>
</dbReference>
<dbReference type="Pfam" id="PF08716">
    <property type="entry name" value="CoV_NSP7"/>
    <property type="match status" value="1"/>
</dbReference>
<dbReference type="Pfam" id="PF08717">
    <property type="entry name" value="CoV_NSP8"/>
    <property type="match status" value="1"/>
</dbReference>
<dbReference type="Pfam" id="PF08710">
    <property type="entry name" value="CoV_NSP9"/>
    <property type="match status" value="1"/>
</dbReference>
<dbReference type="Pfam" id="PF08715">
    <property type="entry name" value="CoV_peptidase"/>
    <property type="match status" value="1"/>
</dbReference>
<dbReference type="Pfam" id="PF01661">
    <property type="entry name" value="Macro"/>
    <property type="match status" value="1"/>
</dbReference>
<dbReference type="Pfam" id="PF22104">
    <property type="entry name" value="MHV_Nsp3_DPUP"/>
    <property type="match status" value="1"/>
</dbReference>
<dbReference type="Pfam" id="PF01831">
    <property type="entry name" value="Peptidase_C16"/>
    <property type="match status" value="1"/>
</dbReference>
<dbReference type="Pfam" id="PF05409">
    <property type="entry name" value="Peptidase_C30"/>
    <property type="match status" value="1"/>
</dbReference>
<dbReference type="SMART" id="SM00506">
    <property type="entry name" value="A1pp"/>
    <property type="match status" value="1"/>
</dbReference>
<dbReference type="SUPFAM" id="SSF144246">
    <property type="entry name" value="Coronavirus NSP10-like"/>
    <property type="match status" value="1"/>
</dbReference>
<dbReference type="SUPFAM" id="SSF140367">
    <property type="entry name" value="Coronavirus NSP7-like"/>
    <property type="match status" value="1"/>
</dbReference>
<dbReference type="SUPFAM" id="SSF143076">
    <property type="entry name" value="Coronavirus NSP8-like"/>
    <property type="match status" value="1"/>
</dbReference>
<dbReference type="SUPFAM" id="SSF52949">
    <property type="entry name" value="Macro domain-like"/>
    <property type="match status" value="1"/>
</dbReference>
<dbReference type="SUPFAM" id="SSF159936">
    <property type="entry name" value="NSP3A-like"/>
    <property type="match status" value="1"/>
</dbReference>
<dbReference type="SUPFAM" id="SSF101816">
    <property type="entry name" value="Replicase NSP9"/>
    <property type="match status" value="1"/>
</dbReference>
<dbReference type="SUPFAM" id="SSF50494">
    <property type="entry name" value="Trypsin-like serine proteases"/>
    <property type="match status" value="1"/>
</dbReference>
<dbReference type="PROSITE" id="PS51963">
    <property type="entry name" value="BCOV_NSP1_C"/>
    <property type="match status" value="1"/>
</dbReference>
<dbReference type="PROSITE" id="PS51942">
    <property type="entry name" value="BCOV_NSP3C_C"/>
    <property type="match status" value="1"/>
</dbReference>
<dbReference type="PROSITE" id="PS51994">
    <property type="entry name" value="BCOV_NSP3E_G2M"/>
    <property type="match status" value="1"/>
</dbReference>
<dbReference type="PROSITE" id="PS51945">
    <property type="entry name" value="BCOV_NSP3E_NAB"/>
    <property type="match status" value="1"/>
</dbReference>
<dbReference type="PROSITE" id="PS51993">
    <property type="entry name" value="COV_3ECTO"/>
    <property type="match status" value="1"/>
</dbReference>
<dbReference type="PROSITE" id="PS51952">
    <property type="entry name" value="COV_EXON_MTASE_COACT"/>
    <property type="match status" value="1"/>
</dbReference>
<dbReference type="PROSITE" id="PS51962">
    <property type="entry name" value="COV_NSP1"/>
    <property type="match status" value="1"/>
</dbReference>
<dbReference type="PROSITE" id="PS51991">
    <property type="entry name" value="COV_NSP2_C"/>
    <property type="match status" value="1"/>
</dbReference>
<dbReference type="PROSITE" id="PS51990">
    <property type="entry name" value="COV_NSP2_M"/>
    <property type="match status" value="1"/>
</dbReference>
<dbReference type="PROSITE" id="PS51989">
    <property type="entry name" value="COV_NSP2_N"/>
    <property type="match status" value="1"/>
</dbReference>
<dbReference type="PROSITE" id="PS51992">
    <property type="entry name" value="COV_NSP3_Y"/>
    <property type="match status" value="1"/>
</dbReference>
<dbReference type="PROSITE" id="PS51943">
    <property type="entry name" value="COV_NSP3A_UBL"/>
    <property type="match status" value="1"/>
</dbReference>
<dbReference type="PROSITE" id="PS51944">
    <property type="entry name" value="COV_NSP3D_UBL"/>
    <property type="match status" value="1"/>
</dbReference>
<dbReference type="PROSITE" id="PS51946">
    <property type="entry name" value="COV_NSP4C"/>
    <property type="match status" value="1"/>
</dbReference>
<dbReference type="PROSITE" id="PS51949">
    <property type="entry name" value="COV_NSP7"/>
    <property type="match status" value="1"/>
</dbReference>
<dbReference type="PROSITE" id="PS51950">
    <property type="entry name" value="COV_NSP8"/>
    <property type="match status" value="1"/>
</dbReference>
<dbReference type="PROSITE" id="PS51951">
    <property type="entry name" value="COV_NSP9_SSRNA_BD"/>
    <property type="match status" value="1"/>
</dbReference>
<dbReference type="PROSITE" id="PS51442">
    <property type="entry name" value="M_PRO"/>
    <property type="match status" value="1"/>
</dbReference>
<dbReference type="PROSITE" id="PS51154">
    <property type="entry name" value="MACRO"/>
    <property type="match status" value="1"/>
</dbReference>
<dbReference type="PROSITE" id="PS51124">
    <property type="entry name" value="PEPTIDASE_C16"/>
    <property type="match status" value="2"/>
</dbReference>
<gene>
    <name type="ORF">1a</name>
</gene>
<evidence type="ECO:0000250" key="1"/>
<evidence type="ECO:0000250" key="2">
    <source>
        <dbReference type="UniProtKB" id="P0DTC1"/>
    </source>
</evidence>
<evidence type="ECO:0000255" key="3"/>
<evidence type="ECO:0000255" key="4">
    <source>
        <dbReference type="PROSITE-ProRule" id="PRU00214"/>
    </source>
</evidence>
<evidence type="ECO:0000255" key="5">
    <source>
        <dbReference type="PROSITE-ProRule" id="PRU00444"/>
    </source>
</evidence>
<evidence type="ECO:0000255" key="6">
    <source>
        <dbReference type="PROSITE-ProRule" id="PRU00490"/>
    </source>
</evidence>
<evidence type="ECO:0000255" key="7">
    <source>
        <dbReference type="PROSITE-ProRule" id="PRU00772"/>
    </source>
</evidence>
<evidence type="ECO:0000255" key="8">
    <source>
        <dbReference type="PROSITE-ProRule" id="PRU01289"/>
    </source>
</evidence>
<evidence type="ECO:0000255" key="9">
    <source>
        <dbReference type="PROSITE-ProRule" id="PRU01290"/>
    </source>
</evidence>
<evidence type="ECO:0000255" key="10">
    <source>
        <dbReference type="PROSITE-ProRule" id="PRU01291"/>
    </source>
</evidence>
<evidence type="ECO:0000255" key="11">
    <source>
        <dbReference type="PROSITE-ProRule" id="PRU01294"/>
    </source>
</evidence>
<evidence type="ECO:0000255" key="12">
    <source>
        <dbReference type="PROSITE-ProRule" id="PRU01295"/>
    </source>
</evidence>
<evidence type="ECO:0000255" key="13">
    <source>
        <dbReference type="PROSITE-ProRule" id="PRU01296"/>
    </source>
</evidence>
<evidence type="ECO:0000255" key="14">
    <source>
        <dbReference type="PROSITE-ProRule" id="PRU01297"/>
    </source>
</evidence>
<evidence type="ECO:0000255" key="15">
    <source>
        <dbReference type="PROSITE-ProRule" id="PRU01307"/>
    </source>
</evidence>
<evidence type="ECO:0000255" key="16">
    <source>
        <dbReference type="PROSITE-ProRule" id="PRU01308"/>
    </source>
</evidence>
<evidence type="ECO:0000255" key="17">
    <source>
        <dbReference type="PROSITE-ProRule" id="PRU01333"/>
    </source>
</evidence>
<evidence type="ECO:0000255" key="18">
    <source>
        <dbReference type="PROSITE-ProRule" id="PRU01334"/>
    </source>
</evidence>
<evidence type="ECO:0000255" key="19">
    <source>
        <dbReference type="PROSITE-ProRule" id="PRU01335"/>
    </source>
</evidence>
<evidence type="ECO:0000255" key="20">
    <source>
        <dbReference type="PROSITE-ProRule" id="PRU01336"/>
    </source>
</evidence>
<evidence type="ECO:0000255" key="21">
    <source>
        <dbReference type="PROSITE-ProRule" id="PRU01337"/>
    </source>
</evidence>
<evidence type="ECO:0000255" key="22">
    <source>
        <dbReference type="PROSITE-ProRule" id="PRU01338"/>
    </source>
</evidence>
<evidence type="ECO:0000256" key="23">
    <source>
        <dbReference type="SAM" id="MobiDB-lite"/>
    </source>
</evidence>
<evidence type="ECO:0000305" key="24"/>
<accession>P0C6U4</accession>
<accession>Q14EB2</accession>
<organism>
    <name type="scientific">Human coronavirus HKU1 (isolate N2)</name>
    <name type="common">HCoV-HKU1</name>
    <dbReference type="NCBI Taxonomy" id="443240"/>
    <lineage>
        <taxon>Viruses</taxon>
        <taxon>Riboviria</taxon>
        <taxon>Orthornavirae</taxon>
        <taxon>Pisuviricota</taxon>
        <taxon>Pisoniviricetes</taxon>
        <taxon>Nidovirales</taxon>
        <taxon>Cornidovirineae</taxon>
        <taxon>Coronaviridae</taxon>
        <taxon>Orthocoronavirinae</taxon>
        <taxon>Betacoronavirus</taxon>
        <taxon>Embecovirus</taxon>
        <taxon>Human coronavirus HKU1</taxon>
    </lineage>
</organism>
<keyword id="KW-1072">Activation of host autophagy by virus</keyword>
<keyword id="KW-1132">Decay of host mRNAs by virus</keyword>
<keyword id="KW-1015">Disulfide bond</keyword>
<keyword id="KW-0255">Endonuclease</keyword>
<keyword id="KW-1262">Eukaryotic host gene expression shutoff by virus</keyword>
<keyword id="KW-1193">Eukaryotic host translation shutoff by virus</keyword>
<keyword id="KW-1035">Host cytoplasm</keyword>
<keyword id="KW-1190">Host gene expression shutoff by virus</keyword>
<keyword id="KW-1043">Host membrane</keyword>
<keyword id="KW-1192">Host mRNA suppression by virus</keyword>
<keyword id="KW-0945">Host-virus interaction</keyword>
<keyword id="KW-0378">Hydrolase</keyword>
<keyword id="KW-1090">Inhibition of host innate immune response by virus</keyword>
<keyword id="KW-1114">Inhibition of host interferon signaling pathway by virus</keyword>
<keyword id="KW-1092">Inhibition of host IRF3 by virus</keyword>
<keyword id="KW-1095">Inhibition of host ISG15 by virus</keyword>
<keyword id="KW-1113">Inhibition of host RLR pathway by virus</keyword>
<keyword id="KW-0922">Interferon antiviral system evasion</keyword>
<keyword id="KW-0472">Membrane</keyword>
<keyword id="KW-0479">Metal-binding</keyword>
<keyword id="KW-0489">Methyltransferase</keyword>
<keyword id="KW-1127">Modulation of host ubiquitin pathway by viral deubiquitinase</keyword>
<keyword id="KW-1130">Modulation of host ubiquitin pathway by virus</keyword>
<keyword id="KW-0540">Nuclease</keyword>
<keyword id="KW-0645">Protease</keyword>
<keyword id="KW-0677">Repeat</keyword>
<keyword id="KW-0688">Ribosomal frameshifting</keyword>
<keyword id="KW-0694">RNA-binding</keyword>
<keyword id="KW-0788">Thiol protease</keyword>
<keyword id="KW-0808">Transferase</keyword>
<keyword id="KW-0812">Transmembrane</keyword>
<keyword id="KW-1133">Transmembrane helix</keyword>
<keyword id="KW-0833">Ubl conjugation pathway</keyword>
<keyword id="KW-0899">Viral immunoevasion</keyword>
<keyword id="KW-0862">Zinc</keyword>
<keyword id="KW-0863">Zinc-finger</keyword>
<comment type="function">
    <text evidence="1">The papain-like proteinase 1 (PL1-PRO) and papain-like proteinase 2 (PL2-PRO) are responsible for the cleavages located at the N-terminus of the replicase polyprotein. In addition, PLP2 possesses a deubiquitinating/deISGylating activity and processes both 'Lys-48'- and 'Lys-63'-linked polyubiquitin chains from cellular substrates. Antagonizes innate immune induction of type I interferon by blocking the phosphorylation, dimerization and subsequent nuclear translocation of host IRF-3 (By similarity).</text>
</comment>
<comment type="function">
    <molecule>3C-like proteinase nsp5</molecule>
    <text evidence="7">Responsible for the majority of cleavages as it cleaves the C-terminus of replicase polyprotein at 11 sites. Recognizes substrates containing the core sequence [ILMVF]-Q-|-[SGACN]. Inhibited by the substrate-analog Cbz-Val-Asn-Ser-Thr-Leu-Gln-CMK. Also contains an ADP-ribose-1''-phosphate (ADRP)-binding function (By similarity).</text>
</comment>
<comment type="function">
    <text evidence="1">Nsp7-nsp8 hexadecamer may possibly confer processivity to the polymerase, maybe by binding to dsRNA or by producing primers utilized by the latter.</text>
</comment>
<comment type="function">
    <molecule>RNA-capping enzyme subunit nsp9</molecule>
    <text evidence="2">Catalytic subunit of viral RNA capping enzyme which catalyzes the RNA guanylyltransferase reaction for genomic and sub-genomic RNAs. The kinase-like NiRAN domain of NSP12 transfers RNA to the amino terminus of NSP9, forming a covalent RNA-protein intermediate. Subsequently, the NiRAN domain transfers RNA to GDP, forming the core cap structure GpppA-RNA. The NSP14 and NSP16 methyltransferases then add methyl groups to form functional cap structures.</text>
</comment>
<comment type="function">
    <molecule>Non-structural protein 1</molecule>
    <text evidence="1">Binds to the 40S ribosomal subunit and inhibits host translation. The nsp1-40S ribosome complex further induces an endonucleolytic cleavage near the 5'UTR of host mRNAs, targeting them for degradation. By suppressing host gene expression, nsp1 facilitates efficient viral gene expression in infected cells and evasion from host immune response (By similarity).</text>
</comment>
<comment type="catalytic activity">
    <molecule>Papain-like protease nsp3</molecule>
    <reaction evidence="2">
        <text>Thiol-dependent hydrolysis of ester, thioester, amide, peptide and isopeptide bonds formed by the C-terminal Gly of ubiquitin (a 76-residue protein attached to proteins as an intracellular targeting signal).</text>
        <dbReference type="EC" id="3.4.19.12"/>
    </reaction>
</comment>
<comment type="catalytic activity">
    <molecule>3C-like proteinase nsp5</molecule>
    <reaction evidence="2">
        <text>TSAVLQ-|-SGFRK-NH2 and SGVTFQ-|-GKFKK the two peptides corresponding to the two self-cleavage sites of the SARS 3C-like proteinase are the two most reactive peptide substrates. The enzyme exhibits a strong preference for substrates containing Gln at P1 position and Leu at P2 position.</text>
        <dbReference type="EC" id="3.4.22.69"/>
    </reaction>
</comment>
<comment type="catalytic activity">
    <molecule>RNA-capping enzyme subunit nsp9</molecule>
    <reaction evidence="2">
        <text>a 5'-end diphospho-ribonucleoside in mRNA + GTP + H(+) = a 5'-end (5'-triphosphoguanosine)-ribonucleoside in mRNA + diphosphate</text>
        <dbReference type="Rhea" id="RHEA:67012"/>
        <dbReference type="Rhea" id="RHEA-COMP:17165"/>
        <dbReference type="Rhea" id="RHEA-COMP:17166"/>
        <dbReference type="ChEBI" id="CHEBI:15378"/>
        <dbReference type="ChEBI" id="CHEBI:33019"/>
        <dbReference type="ChEBI" id="CHEBI:37565"/>
        <dbReference type="ChEBI" id="CHEBI:167616"/>
        <dbReference type="ChEBI" id="CHEBI:167617"/>
        <dbReference type="EC" id="2.7.7.50"/>
    </reaction>
    <physiologicalReaction direction="right-to-left" evidence="2">
        <dbReference type="Rhea" id="RHEA:67014"/>
    </physiologicalReaction>
</comment>
<comment type="subunit">
    <text evidence="1">3CL-PRO exists as monomer and homodimer. Eight copies of nsp7 and eight copies of nsp8 assemble to form a heterohexadecamer. Nsp9 is a dimer. Nsp10 forms a dodecamer (By similarity).</text>
</comment>
<comment type="subcellular location">
    <molecule>Papain-like protease nsp3</molecule>
    <subcellularLocation>
        <location evidence="24">Host membrane</location>
        <topology evidence="24">Multi-pass membrane protein</topology>
    </subcellularLocation>
</comment>
<comment type="subcellular location">
    <molecule>Non-structural protein 4</molecule>
    <subcellularLocation>
        <location evidence="24">Host membrane</location>
        <topology evidence="24">Multi-pass membrane protein</topology>
    </subcellularLocation>
</comment>
<comment type="subcellular location">
    <molecule>Non-structural protein 6</molecule>
    <subcellularLocation>
        <location evidence="24">Host membrane</location>
        <topology evidence="24">Multi-pass membrane protein</topology>
    </subcellularLocation>
</comment>
<comment type="subcellular location">
    <molecule>Non-structural protein 7</molecule>
    <subcellularLocation>
        <location evidence="1">Host cytoplasm</location>
        <location evidence="1">Host perinuclear region</location>
    </subcellularLocation>
    <text>nsp7, nsp8, nsp9 and nsp10 are localized in cytoplasmic foci, largely perinuclear. Late in infection, they merge into confluent complexes.</text>
</comment>
<comment type="subcellular location">
    <molecule>Non-structural protein 8</molecule>
    <subcellularLocation>
        <location evidence="1">Host cytoplasm</location>
        <location evidence="1">Host perinuclear region</location>
    </subcellularLocation>
    <text>nsp7, nsp8, nsp9 and nsp10 are localized in cytoplasmic foci, largely perinuclear. Late in infection, they merge into confluent complexes.</text>
</comment>
<comment type="subcellular location">
    <molecule>RNA-capping enzyme subunit nsp9</molecule>
    <subcellularLocation>
        <location evidence="1">Host cytoplasm</location>
        <location evidence="1">Host perinuclear region</location>
    </subcellularLocation>
    <text>nsp7, nsp8, nsp9 and nsp10 are localized in cytoplasmic foci, largely perinuclear. Late in infection, they merge into confluent complexes.</text>
</comment>
<comment type="subcellular location">
    <molecule>Non-structural protein 10</molecule>
    <subcellularLocation>
        <location evidence="1">Host cytoplasm</location>
        <location evidence="1">Host perinuclear region</location>
    </subcellularLocation>
    <text>nsp7, nsp8, nsp9 and nsp10 are localized in cytoplasmic foci, largely perinuclear. Late in infection, they merge into confluent complexes.</text>
</comment>
<comment type="alternative products">
    <event type="ribosomal frameshifting"/>
    <isoform>
        <id>P0C6U4-1</id>
        <name>Replicase polyprotein 1a</name>
        <name>pp1a</name>
        <name>ORF1a polyprotein</name>
        <sequence type="displayed"/>
    </isoform>
    <isoform>
        <id>P0C6X3-1</id>
        <name>Replicase polyprotein 1ab</name>
        <name>pp1ab</name>
        <sequence type="external"/>
    </isoform>
</comment>
<comment type="domain">
    <text>The hydrophobic domains (HD) could mediate the membrane association of the replication complex and thereby alter the architecture of the host cell membrane.</text>
</comment>
<comment type="PTM">
    <text evidence="1">Specific enzymatic cleavages in vivo by its own proteases yield mature proteins. 3CL-PRO and PL-PRO proteinases are autocatalytically processed (By similarity).</text>
</comment>
<comment type="miscellaneous">
    <text>Isolate N2 belongs to genotype B.</text>
</comment>
<comment type="miscellaneous">
    <molecule>Isoform Replicase polyprotein 1a</molecule>
    <text>Produced by conventional translation.</text>
</comment>
<comment type="similarity">
    <text evidence="24">Belongs to the coronaviruses polyprotein 1ab family.</text>
</comment>
<reference key="1">
    <citation type="journal article" date="2006" name="J. Virol.">
        <title>Comparative analysis of 22 coronavirus HKU1 genomes reveals a novel genotype and evidence of natural recombination in coronavirus HKU1.</title>
        <authorList>
            <person name="Woo P.C.Y."/>
            <person name="Lau S.K.P."/>
            <person name="Yip C.C.Y."/>
            <person name="Huang Y."/>
            <person name="Tsoi H.-W."/>
            <person name="Chan K.-H."/>
            <person name="Yuen K.-Y."/>
        </authorList>
    </citation>
    <scope>NUCLEOTIDE SEQUENCE [GENOMIC RNA]</scope>
</reference>
<feature type="chain" id="PRO_0000338206" description="Replicase polyprotein 1a">
    <location>
        <begin position="1"/>
        <end position="4441"/>
    </location>
</feature>
<feature type="chain" id="PRO_0000338207" description="Non-structural protein 1" evidence="1">
    <location>
        <begin position="1"/>
        <end position="222"/>
    </location>
</feature>
<feature type="chain" id="PRO_0000338208" description="Non-structural protein 2" evidence="1">
    <location>
        <begin position="223"/>
        <end position="809"/>
    </location>
</feature>
<feature type="chain" id="PRO_0000338209" description="Papain-like protease nsp3" evidence="1">
    <location>
        <begin position="810"/>
        <end position="2808"/>
    </location>
</feature>
<feature type="chain" id="PRO_0000338210" description="Non-structural protein 4" evidence="1">
    <location>
        <begin position="2809"/>
        <end position="3304"/>
    </location>
</feature>
<feature type="chain" id="PRO_0000338211" description="3C-like proteinase nsp5" evidence="1">
    <location>
        <begin position="3305"/>
        <end position="3607"/>
    </location>
</feature>
<feature type="chain" id="PRO_0000338212" description="Non-structural protein 6" evidence="1">
    <location>
        <begin position="3608"/>
        <end position="3894"/>
    </location>
</feature>
<feature type="chain" id="PRO_0000338213" description="Non-structural protein 7" evidence="1">
    <location>
        <begin position="3895"/>
        <end position="3986"/>
    </location>
</feature>
<feature type="chain" id="PRO_0000338214" description="Non-structural protein 8" evidence="1">
    <location>
        <begin position="3987"/>
        <end position="4180"/>
    </location>
</feature>
<feature type="chain" id="PRO_0000338215" description="RNA-capping enzyme subunit nsp9" evidence="1">
    <location>
        <begin position="4181"/>
        <end position="4290"/>
    </location>
</feature>
<feature type="chain" id="PRO_0000338216" description="Non-structural protein 10" evidence="1">
    <location>
        <begin position="4291"/>
        <end position="4427"/>
    </location>
</feature>
<feature type="chain" id="PRO_0000338217" description="Non-structural protein 11" evidence="3">
    <location>
        <begin position="4428"/>
        <end position="4441"/>
    </location>
</feature>
<feature type="transmembrane region" description="Helical" evidence="3">
    <location>
        <begin position="2196"/>
        <end position="2216"/>
    </location>
</feature>
<feature type="transmembrane region" description="Helical" evidence="3">
    <location>
        <begin position="2257"/>
        <end position="2277"/>
    </location>
</feature>
<feature type="transmembrane region" description="Helical" evidence="3">
    <location>
        <begin position="2288"/>
        <end position="2308"/>
    </location>
</feature>
<feature type="transmembrane region" description="Helical" evidence="3">
    <location>
        <begin position="2371"/>
        <end position="2391"/>
    </location>
</feature>
<feature type="transmembrane region" description="Helical" evidence="3">
    <location>
        <begin position="2413"/>
        <end position="2433"/>
    </location>
</feature>
<feature type="transmembrane region" description="Helical" evidence="3">
    <location>
        <begin position="2814"/>
        <end position="2834"/>
    </location>
</feature>
<feature type="transmembrane region" description="Helical" evidence="3">
    <location>
        <begin position="3089"/>
        <end position="3109"/>
    </location>
</feature>
<feature type="transmembrane region" description="Helical" evidence="3">
    <location>
        <begin position="3121"/>
        <end position="3141"/>
    </location>
</feature>
<feature type="transmembrane region" description="Helical" evidence="3">
    <location>
        <begin position="3148"/>
        <end position="3168"/>
    </location>
</feature>
<feature type="transmembrane region" description="Helical" evidence="3">
    <location>
        <begin position="3173"/>
        <end position="3193"/>
    </location>
</feature>
<feature type="transmembrane region" description="Helical" evidence="3">
    <location>
        <begin position="3621"/>
        <end position="3641"/>
    </location>
</feature>
<feature type="transmembrane region" description="Helical" evidence="3">
    <location>
        <begin position="3646"/>
        <end position="3666"/>
    </location>
</feature>
<feature type="transmembrane region" description="Helical" evidence="3">
    <location>
        <begin position="3671"/>
        <end position="3691"/>
    </location>
</feature>
<feature type="transmembrane region" description="Helical" evidence="3">
    <location>
        <begin position="3714"/>
        <end position="3734"/>
    </location>
</feature>
<feature type="transmembrane region" description="Helical" evidence="3">
    <location>
        <begin position="3742"/>
        <end position="3762"/>
    </location>
</feature>
<feature type="transmembrane region" description="Helical" evidence="3">
    <location>
        <begin position="3770"/>
        <end position="3790"/>
    </location>
</feature>
<feature type="transmembrane region" description="Helical" evidence="3">
    <location>
        <begin position="3813"/>
        <end position="3833"/>
    </location>
</feature>
<feature type="domain" description="CoV Nsp1 globular" evidence="15">
    <location>
        <begin position="54"/>
        <end position="174"/>
    </location>
</feature>
<feature type="domain" description="BetaCoV Nsp1 C-terminal" evidence="16">
    <location>
        <begin position="192"/>
        <end position="222"/>
    </location>
</feature>
<feature type="domain" description="CoV Nsp2 N-terminal" evidence="17">
    <location>
        <begin position="226"/>
        <end position="488"/>
    </location>
</feature>
<feature type="domain" description="CoV Nsp2 middle" evidence="18">
    <location>
        <begin position="493"/>
        <end position="681"/>
    </location>
</feature>
<feature type="domain" description="CoV Nsp2 C-terminal" evidence="19">
    <location>
        <begin position="697"/>
        <end position="809"/>
    </location>
</feature>
<feature type="domain" description="Ubiquitin-like 1" evidence="4">
    <location>
        <begin position="811"/>
        <end position="923"/>
    </location>
</feature>
<feature type="repeat" description="1">
    <location>
        <begin position="945"/>
        <end position="954"/>
    </location>
</feature>
<feature type="repeat" description="2">
    <location>
        <begin position="955"/>
        <end position="964"/>
    </location>
</feature>
<feature type="repeat" description="3">
    <location>
        <begin position="965"/>
        <end position="974"/>
    </location>
</feature>
<feature type="repeat" description="4">
    <location>
        <begin position="975"/>
        <end position="984"/>
    </location>
</feature>
<feature type="repeat" description="5">
    <location>
        <begin position="985"/>
        <end position="994"/>
    </location>
</feature>
<feature type="repeat" description="6">
    <location>
        <begin position="995"/>
        <end position="1004"/>
    </location>
</feature>
<feature type="repeat" description="7">
    <location>
        <begin position="1005"/>
        <end position="1014"/>
    </location>
</feature>
<feature type="repeat" description="8">
    <location>
        <begin position="1015"/>
        <end position="1024"/>
    </location>
</feature>
<feature type="repeat" description="9">
    <location>
        <begin position="1025"/>
        <end position="1034"/>
    </location>
</feature>
<feature type="repeat" description="10">
    <location>
        <begin position="1035"/>
        <end position="1044"/>
    </location>
</feature>
<feature type="repeat" description="11">
    <location>
        <begin position="1045"/>
        <end position="1054"/>
    </location>
</feature>
<feature type="domain" description="Peptidase C16 1" evidence="5">
    <location>
        <begin position="1093"/>
        <end position="1343"/>
    </location>
</feature>
<feature type="domain" description="Macro" evidence="6">
    <location>
        <begin position="1321"/>
        <end position="1492"/>
    </location>
</feature>
<feature type="domain" description="DPUP" evidence="8">
    <location>
        <begin position="1548"/>
        <end position="1619"/>
    </location>
</feature>
<feature type="domain" description="Ubiquitin-like 2" evidence="4">
    <location>
        <begin position="1619"/>
        <end position="1674"/>
    </location>
</feature>
<feature type="domain" description="Peptidase C16 2" evidence="5">
    <location>
        <begin position="1688"/>
        <end position="1948"/>
    </location>
</feature>
<feature type="domain" description="Nucleic acid-binding" evidence="9">
    <location>
        <begin position="1962"/>
        <end position="2063"/>
    </location>
</feature>
<feature type="domain" description="G2M" evidence="22">
    <location>
        <begin position="2078"/>
        <end position="2227"/>
    </location>
</feature>
<feature type="domain" description="3Ecto" evidence="21">
    <location>
        <begin position="2293"/>
        <end position="2354"/>
    </location>
</feature>
<feature type="domain" description="CoV Nsp3 Y" evidence="20">
    <location>
        <begin position="2441"/>
        <end position="2808"/>
    </location>
</feature>
<feature type="domain" description="Nsp4C" evidence="10">
    <location>
        <begin position="3207"/>
        <end position="3304"/>
    </location>
</feature>
<feature type="domain" description="Peptidase C30" evidence="7">
    <location>
        <begin position="3305"/>
        <end position="3607"/>
    </location>
</feature>
<feature type="domain" description="RdRp Nsp7 cofactor" evidence="11">
    <location>
        <begin position="3895"/>
        <end position="3983"/>
    </location>
</feature>
<feature type="domain" description="RdRp Nsp8 cofactor" evidence="12">
    <location>
        <begin position="3984"/>
        <end position="4180"/>
    </location>
</feature>
<feature type="domain" description="Nsp9 ssRNA-binding" evidence="13">
    <location>
        <begin position="4181"/>
        <end position="4290"/>
    </location>
</feature>
<feature type="domain" description="ExoN/MTase coactivator" evidence="14">
    <location>
        <begin position="4291"/>
        <end position="4428"/>
    </location>
</feature>
<feature type="zinc finger region" description="C4-type 1" evidence="5">
    <location>
        <begin position="1208"/>
        <end position="1236"/>
    </location>
</feature>
<feature type="zinc finger region" description="C4-type 2" evidence="5">
    <location>
        <begin position="1805"/>
        <end position="1841"/>
    </location>
</feature>
<feature type="zinc finger region" evidence="1">
    <location>
        <begin position="4364"/>
        <end position="4380"/>
    </location>
</feature>
<feature type="zinc finger region" evidence="1">
    <location>
        <begin position="4406"/>
        <end position="4419"/>
    </location>
</feature>
<feature type="region of interest" description="C4" evidence="17">
    <location>
        <begin position="365"/>
        <end position="389"/>
    </location>
</feature>
<feature type="region of interest" description="11 X 10 AA tandem repeat of N-[DN]-D-E-D-V-V-T-G-D">
    <location>
        <begin position="945"/>
        <end position="1054"/>
    </location>
</feature>
<feature type="region of interest" description="Disordered" evidence="23">
    <location>
        <begin position="947"/>
        <end position="1036"/>
    </location>
</feature>
<feature type="region of interest" description="HD1" evidence="1">
    <location>
        <begin position="2196"/>
        <end position="2433"/>
    </location>
</feature>
<feature type="region of interest" description="Y1" evidence="20">
    <location>
        <begin position="2441"/>
        <end position="2531"/>
    </location>
</feature>
<feature type="region of interest" description="ZF1" evidence="20">
    <location>
        <begin position="2445"/>
        <end position="2458"/>
    </location>
</feature>
<feature type="region of interest" description="ZF2" evidence="20">
    <location>
        <begin position="2491"/>
        <end position="2501"/>
    </location>
</feature>
<feature type="region of interest" description="CoV-Y" evidence="20">
    <location>
        <begin position="2532"/>
        <end position="2808"/>
    </location>
</feature>
<feature type="region of interest" description="Y2" evidence="20">
    <location>
        <begin position="2532"/>
        <end position="2624"/>
    </location>
</feature>
<feature type="region of interest" description="Y3" evidence="20">
    <location>
        <begin position="2625"/>
        <end position="2707"/>
    </location>
</feature>
<feature type="region of interest" description="Y4" evidence="20">
    <location>
        <begin position="2708"/>
        <end position="2808"/>
    </location>
</feature>
<feature type="region of interest" description="HD2" evidence="1">
    <location>
        <begin position="2814"/>
        <end position="3193"/>
    </location>
</feature>
<feature type="region of interest" description="HD3" evidence="1">
    <location>
        <begin position="3621"/>
        <end position="3833"/>
    </location>
</feature>
<feature type="active site" description="For PL1-PRO activity" evidence="5">
    <location>
        <position position="1131"/>
    </location>
</feature>
<feature type="active site" description="For PL1-PRO activity" evidence="5">
    <location>
        <position position="1282"/>
    </location>
</feature>
<feature type="active site" description="For PL1-PRO activity" evidence="5">
    <location>
        <position position="1293"/>
    </location>
</feature>
<feature type="active site" description="For PL2-PRO activity" evidence="5">
    <location>
        <position position="1727"/>
    </location>
</feature>
<feature type="active site" description="For PL2-PRO activity" evidence="5">
    <location>
        <position position="1884"/>
    </location>
</feature>
<feature type="active site" description="For PL2-PRO activity" evidence="5">
    <location>
        <position position="1898"/>
    </location>
</feature>
<feature type="active site" description="For 3CL-PRO activity" evidence="7">
    <location>
        <position position="3345"/>
    </location>
</feature>
<feature type="active site" description="For 3CL-PRO activity" evidence="7">
    <location>
        <position position="3449"/>
    </location>
</feature>
<feature type="binding site" evidence="17">
    <location>
        <position position="365"/>
    </location>
    <ligand>
        <name>Zn(2+)</name>
        <dbReference type="ChEBI" id="CHEBI:29105"/>
        <label>1</label>
    </ligand>
</feature>
<feature type="binding site" evidence="17">
    <location>
        <position position="370"/>
    </location>
    <ligand>
        <name>Zn(2+)</name>
        <dbReference type="ChEBI" id="CHEBI:29105"/>
        <label>1</label>
    </ligand>
</feature>
<feature type="binding site" evidence="17">
    <location>
        <position position="386"/>
    </location>
    <ligand>
        <name>Zn(2+)</name>
        <dbReference type="ChEBI" id="CHEBI:29105"/>
        <label>1</label>
    </ligand>
</feature>
<feature type="binding site" evidence="17">
    <location>
        <position position="389"/>
    </location>
    <ligand>
        <name>Zn(2+)</name>
        <dbReference type="ChEBI" id="CHEBI:29105"/>
        <label>1</label>
    </ligand>
</feature>
<feature type="binding site" evidence="5">
    <location>
        <position position="1208"/>
    </location>
    <ligand>
        <name>Zn(2+)</name>
        <dbReference type="ChEBI" id="CHEBI:29105"/>
        <label>2</label>
    </ligand>
</feature>
<feature type="binding site" evidence="5">
    <location>
        <position position="1211"/>
    </location>
    <ligand>
        <name>Zn(2+)</name>
        <dbReference type="ChEBI" id="CHEBI:29105"/>
        <label>2</label>
    </ligand>
</feature>
<feature type="binding site" evidence="5">
    <location>
        <position position="1234"/>
    </location>
    <ligand>
        <name>Zn(2+)</name>
        <dbReference type="ChEBI" id="CHEBI:29105"/>
        <label>2</label>
    </ligand>
</feature>
<feature type="binding site" evidence="5">
    <location>
        <position position="1236"/>
    </location>
    <ligand>
        <name>Zn(2+)</name>
        <dbReference type="ChEBI" id="CHEBI:29105"/>
        <label>2</label>
    </ligand>
</feature>
<feature type="binding site" evidence="5">
    <location>
        <position position="1805"/>
    </location>
    <ligand>
        <name>Zn(2+)</name>
        <dbReference type="ChEBI" id="CHEBI:29105"/>
        <label>3</label>
    </ligand>
</feature>
<feature type="binding site" evidence="5">
    <location>
        <position position="1807"/>
    </location>
    <ligand>
        <name>Zn(2+)</name>
        <dbReference type="ChEBI" id="CHEBI:29105"/>
        <label>3</label>
    </ligand>
</feature>
<feature type="binding site" evidence="5">
    <location>
        <position position="1839"/>
    </location>
    <ligand>
        <name>Zn(2+)</name>
        <dbReference type="ChEBI" id="CHEBI:29105"/>
        <label>3</label>
    </ligand>
</feature>
<feature type="binding site" evidence="5">
    <location>
        <position position="1841"/>
    </location>
    <ligand>
        <name>Zn(2+)</name>
        <dbReference type="ChEBI" id="CHEBI:29105"/>
        <label>3</label>
    </ligand>
</feature>
<feature type="binding site" evidence="20">
    <location>
        <position position="2445"/>
    </location>
    <ligand>
        <name>Zn(2+)</name>
        <dbReference type="ChEBI" id="CHEBI:29105"/>
        <label>4</label>
    </ligand>
</feature>
<feature type="binding site" evidence="20">
    <location>
        <position position="2450"/>
    </location>
    <ligand>
        <name>Zn(2+)</name>
        <dbReference type="ChEBI" id="CHEBI:29105"/>
        <label>4</label>
    </ligand>
</feature>
<feature type="binding site" evidence="20">
    <location>
        <position position="2455"/>
    </location>
    <ligand>
        <name>Zn(2+)</name>
        <dbReference type="ChEBI" id="CHEBI:29105"/>
        <label>4</label>
    </ligand>
</feature>
<feature type="binding site" evidence="20">
    <location>
        <position position="2458"/>
    </location>
    <ligand>
        <name>Zn(2+)</name>
        <dbReference type="ChEBI" id="CHEBI:29105"/>
        <label>4</label>
    </ligand>
</feature>
<feature type="binding site" evidence="20">
    <location>
        <position position="2491"/>
    </location>
    <ligand>
        <name>Zn(2+)</name>
        <dbReference type="ChEBI" id="CHEBI:29105"/>
        <label>5</label>
    </ligand>
</feature>
<feature type="binding site" evidence="20">
    <location>
        <position position="2494"/>
    </location>
    <ligand>
        <name>Zn(2+)</name>
        <dbReference type="ChEBI" id="CHEBI:29105"/>
        <label>5</label>
    </ligand>
</feature>
<feature type="binding site" evidence="20">
    <location>
        <position position="2498"/>
    </location>
    <ligand>
        <name>Zn(2+)</name>
        <dbReference type="ChEBI" id="CHEBI:29105"/>
        <label>5</label>
    </ligand>
</feature>
<feature type="binding site" evidence="20">
    <location>
        <position position="2501"/>
    </location>
    <ligand>
        <name>Zn(2+)</name>
        <dbReference type="ChEBI" id="CHEBI:29105"/>
        <label>5</label>
    </ligand>
</feature>
<feature type="binding site" evidence="14">
    <location>
        <position position="4364"/>
    </location>
    <ligand>
        <name>Zn(2+)</name>
        <dbReference type="ChEBI" id="CHEBI:29105"/>
        <label>6</label>
    </ligand>
</feature>
<feature type="binding site" evidence="14">
    <location>
        <position position="4367"/>
    </location>
    <ligand>
        <name>Zn(2+)</name>
        <dbReference type="ChEBI" id="CHEBI:29105"/>
        <label>6</label>
    </ligand>
</feature>
<feature type="binding site" evidence="14">
    <location>
        <position position="4373"/>
    </location>
    <ligand>
        <name>Zn(2+)</name>
        <dbReference type="ChEBI" id="CHEBI:29105"/>
        <label>6</label>
    </ligand>
</feature>
<feature type="binding site" evidence="14">
    <location>
        <position position="4380"/>
    </location>
    <ligand>
        <name>Zn(2+)</name>
        <dbReference type="ChEBI" id="CHEBI:29105"/>
        <label>6</label>
    </ligand>
</feature>
<feature type="binding site" evidence="14">
    <location>
        <position position="4406"/>
    </location>
    <ligand>
        <name>Zn(2+)</name>
        <dbReference type="ChEBI" id="CHEBI:29105"/>
        <label>7</label>
    </ligand>
</feature>
<feature type="binding site" evidence="14">
    <location>
        <position position="4409"/>
    </location>
    <ligand>
        <name>Zn(2+)</name>
        <dbReference type="ChEBI" id="CHEBI:29105"/>
        <label>7</label>
    </ligand>
</feature>
<feature type="binding site" evidence="14">
    <location>
        <position position="4417"/>
    </location>
    <ligand>
        <name>Zn(2+)</name>
        <dbReference type="ChEBI" id="CHEBI:29105"/>
        <label>7</label>
    </ligand>
</feature>
<feature type="binding site" evidence="14">
    <location>
        <position position="4419"/>
    </location>
    <ligand>
        <name>Zn(2+)</name>
        <dbReference type="ChEBI" id="CHEBI:29105"/>
        <label>7</label>
    </ligand>
</feature>
<feature type="site" description="Cleavage; by PL1-PRO" evidence="1">
    <location>
        <begin position="222"/>
        <end position="223"/>
    </location>
</feature>
<feature type="site" description="Cleavage; by PL1-PRO" evidence="1">
    <location>
        <begin position="809"/>
        <end position="810"/>
    </location>
</feature>
<feature type="site" description="Cleavage; by PL2-PRO" evidence="1">
    <location>
        <begin position="2808"/>
        <end position="2809"/>
    </location>
</feature>
<feature type="site" description="Cleavage; by 3CL-PRO" evidence="1">
    <location>
        <begin position="3304"/>
        <end position="3305"/>
    </location>
</feature>
<feature type="site" description="Cleavage; by 3CL-PRO" evidence="1">
    <location>
        <begin position="3607"/>
        <end position="3608"/>
    </location>
</feature>
<feature type="site" description="Cleavage; by 3CL-PRO" evidence="1">
    <location>
        <begin position="3894"/>
        <end position="3895"/>
    </location>
</feature>
<feature type="site" description="Cleavage; by 3CL-PRO" evidence="1">
    <location>
        <begin position="3986"/>
        <end position="3987"/>
    </location>
</feature>
<feature type="site" description="Cleavage; by 3CL-PRO" evidence="1">
    <location>
        <begin position="4180"/>
        <end position="4181"/>
    </location>
</feature>
<feature type="site" description="Cleavage; by 3CL-PRO" evidence="1">
    <location>
        <begin position="4290"/>
        <end position="4291"/>
    </location>
</feature>
<feature type="site" description="Cleavage; by 3CL-PRO" evidence="1">
    <location>
        <begin position="4427"/>
        <end position="4428"/>
    </location>
</feature>
<feature type="disulfide bond" evidence="21">
    <location>
        <begin position="2309"/>
        <end position="2333"/>
    </location>
</feature>
<feature type="disulfide bond" evidence="21">
    <location>
        <begin position="2324"/>
        <end position="2330"/>
    </location>
</feature>
<protein>
    <recommendedName>
        <fullName>Replicase polyprotein 1a</fullName>
        <shortName>pp1a</shortName>
    </recommendedName>
    <alternativeName>
        <fullName>ORF1a polyprotein</fullName>
    </alternativeName>
    <component>
        <recommendedName>
            <fullName>Non-structural protein 1</fullName>
            <shortName>nsp1</shortName>
        </recommendedName>
        <alternativeName>
            <fullName>p28</fullName>
        </alternativeName>
    </component>
    <component>
        <recommendedName>
            <fullName>Non-structural protein 2</fullName>
            <shortName>nsp2</shortName>
        </recommendedName>
        <alternativeName>
            <fullName>p65</fullName>
        </alternativeName>
    </component>
    <component>
        <recommendedName>
            <fullName>Papain-like protease nsp3</fullName>
            <shortName>PL-PRO</shortName>
            <ecNumber>3.4.19.12</ecNumber>
            <ecNumber>3.4.22.-</ecNumber>
        </recommendedName>
        <alternativeName>
            <fullName>Non-structural protein 3</fullName>
            <shortName>nsp3</shortName>
        </alternativeName>
        <alternativeName>
            <fullName>PL1-PRO/PL2-PRO</fullName>
        </alternativeName>
        <alternativeName>
            <fullName>PL1/PL2</fullName>
        </alternativeName>
        <alternativeName>
            <fullName>PL2-PRO</fullName>
        </alternativeName>
        <alternativeName>
            <fullName>Papain-like proteinases 1/2</fullName>
        </alternativeName>
        <alternativeName>
            <fullName>p210</fullName>
        </alternativeName>
    </component>
    <component>
        <recommendedName>
            <fullName>Non-structural protein 4</fullName>
            <shortName>nsp4</shortName>
        </recommendedName>
        <alternativeName>
            <fullName>Peptide HD2</fullName>
        </alternativeName>
        <alternativeName>
            <fullName>p44</fullName>
        </alternativeName>
    </component>
    <component>
        <recommendedName>
            <fullName>3C-like proteinase nsp5</fullName>
            <shortName>3CL-PRO</shortName>
            <shortName>3CLp</shortName>
            <ecNumber>3.4.22.69</ecNumber>
        </recommendedName>
        <alternativeName>
            <fullName>M-PRO</fullName>
        </alternativeName>
        <alternativeName>
            <fullName>nsp5</fullName>
        </alternativeName>
        <alternativeName>
            <fullName>p27</fullName>
        </alternativeName>
    </component>
    <component>
        <recommendedName>
            <fullName>Non-structural protein 6</fullName>
            <shortName>nsp6</shortName>
        </recommendedName>
    </component>
    <component>
        <recommendedName>
            <fullName>Non-structural protein 7</fullName>
            <shortName>nsp7</shortName>
        </recommendedName>
        <alternativeName>
            <fullName>p10</fullName>
        </alternativeName>
    </component>
    <component>
        <recommendedName>
            <fullName>Non-structural protein 8</fullName>
            <shortName>nsp8</shortName>
        </recommendedName>
        <alternativeName>
            <fullName>p22</fullName>
        </alternativeName>
    </component>
    <component>
        <recommendedName>
            <fullName>RNA-capping enzyme subunit nsp9</fullName>
        </recommendedName>
        <alternativeName>
            <fullName>Non-structural protein 9</fullName>
            <shortName>nsp9</shortName>
            <ecNumber>2.7.7.50</ecNumber>
        </alternativeName>
        <alternativeName>
            <fullName>p12</fullName>
        </alternativeName>
    </component>
    <component>
        <recommendedName>
            <fullName>Non-structural protein 10</fullName>
            <shortName>nsp10</shortName>
        </recommendedName>
        <alternativeName>
            <fullName>Growth factor-like peptide</fullName>
            <shortName>GFL</shortName>
        </alternativeName>
        <alternativeName>
            <fullName>p15</fullName>
        </alternativeName>
    </component>
    <component>
        <recommendedName>
            <fullName>Non-structural protein 11</fullName>
            <shortName>nsp11</shortName>
        </recommendedName>
    </component>
</protein>
<organismHost>
    <name type="scientific">Homo sapiens</name>
    <name type="common">Human</name>
    <dbReference type="NCBI Taxonomy" id="9606"/>
</organismHost>
<proteinExistence type="inferred from homology"/>